<sequence>MSKLNKTILADFEAAQIQRQLPEFNQGDTVVVNVKVKEGNRERVQAYEGVVIGTKNAGLNSAFTVRKISHGFGVERVFQTHSAIIDSVEVKRRGKVRAGKLYYLRGLEGKAARIKEDLAAAAQAKAARQAAAKAE</sequence>
<comment type="function">
    <text evidence="1">This protein is located at the 30S-50S ribosomal subunit interface and may play a role in the structure and function of the aminoacyl-tRNA binding site.</text>
</comment>
<comment type="similarity">
    <text evidence="1">Belongs to the bacterial ribosomal protein bL19 family.</text>
</comment>
<feature type="chain" id="PRO_0000163573" description="Large ribosomal subunit protein bL19">
    <location>
        <begin position="1"/>
        <end position="135"/>
    </location>
</feature>
<dbReference type="EMBL" id="AE008922">
    <property type="protein sequence ID" value="AAM40500.1"/>
    <property type="molecule type" value="Genomic_DNA"/>
</dbReference>
<dbReference type="RefSeq" id="NP_636576.1">
    <property type="nucleotide sequence ID" value="NC_003902.1"/>
</dbReference>
<dbReference type="RefSeq" id="WP_011036399.1">
    <property type="nucleotide sequence ID" value="NC_003902.1"/>
</dbReference>
<dbReference type="SMR" id="Q8PBC0"/>
<dbReference type="STRING" id="190485.XCC1202"/>
<dbReference type="EnsemblBacteria" id="AAM40500">
    <property type="protein sequence ID" value="AAM40500"/>
    <property type="gene ID" value="XCC1202"/>
</dbReference>
<dbReference type="GeneID" id="97210836"/>
<dbReference type="KEGG" id="xcc:XCC1202"/>
<dbReference type="PATRIC" id="fig|190485.4.peg.1291"/>
<dbReference type="eggNOG" id="COG0335">
    <property type="taxonomic scope" value="Bacteria"/>
</dbReference>
<dbReference type="HOGENOM" id="CLU_103507_2_1_6"/>
<dbReference type="OrthoDB" id="9803541at2"/>
<dbReference type="Proteomes" id="UP000001010">
    <property type="component" value="Chromosome"/>
</dbReference>
<dbReference type="GO" id="GO:0022625">
    <property type="term" value="C:cytosolic large ribosomal subunit"/>
    <property type="evidence" value="ECO:0000318"/>
    <property type="project" value="GO_Central"/>
</dbReference>
<dbReference type="GO" id="GO:0003735">
    <property type="term" value="F:structural constituent of ribosome"/>
    <property type="evidence" value="ECO:0000318"/>
    <property type="project" value="GO_Central"/>
</dbReference>
<dbReference type="GO" id="GO:0006412">
    <property type="term" value="P:translation"/>
    <property type="evidence" value="ECO:0007669"/>
    <property type="project" value="UniProtKB-UniRule"/>
</dbReference>
<dbReference type="FunFam" id="2.30.30.790:FF:000001">
    <property type="entry name" value="50S ribosomal protein L19"/>
    <property type="match status" value="1"/>
</dbReference>
<dbReference type="Gene3D" id="2.30.30.790">
    <property type="match status" value="1"/>
</dbReference>
<dbReference type="HAMAP" id="MF_00402">
    <property type="entry name" value="Ribosomal_bL19"/>
    <property type="match status" value="1"/>
</dbReference>
<dbReference type="InterPro" id="IPR001857">
    <property type="entry name" value="Ribosomal_bL19"/>
</dbReference>
<dbReference type="InterPro" id="IPR018257">
    <property type="entry name" value="Ribosomal_bL19_CS"/>
</dbReference>
<dbReference type="InterPro" id="IPR038657">
    <property type="entry name" value="Ribosomal_bL19_sf"/>
</dbReference>
<dbReference type="InterPro" id="IPR008991">
    <property type="entry name" value="Translation_prot_SH3-like_sf"/>
</dbReference>
<dbReference type="NCBIfam" id="TIGR01024">
    <property type="entry name" value="rplS_bact"/>
    <property type="match status" value="1"/>
</dbReference>
<dbReference type="PANTHER" id="PTHR15680:SF9">
    <property type="entry name" value="LARGE RIBOSOMAL SUBUNIT PROTEIN BL19M"/>
    <property type="match status" value="1"/>
</dbReference>
<dbReference type="PANTHER" id="PTHR15680">
    <property type="entry name" value="RIBOSOMAL PROTEIN L19"/>
    <property type="match status" value="1"/>
</dbReference>
<dbReference type="Pfam" id="PF01245">
    <property type="entry name" value="Ribosomal_L19"/>
    <property type="match status" value="1"/>
</dbReference>
<dbReference type="PIRSF" id="PIRSF002191">
    <property type="entry name" value="Ribosomal_L19"/>
    <property type="match status" value="1"/>
</dbReference>
<dbReference type="PRINTS" id="PR00061">
    <property type="entry name" value="RIBOSOMALL19"/>
</dbReference>
<dbReference type="SUPFAM" id="SSF50104">
    <property type="entry name" value="Translation proteins SH3-like domain"/>
    <property type="match status" value="1"/>
</dbReference>
<dbReference type="PROSITE" id="PS01015">
    <property type="entry name" value="RIBOSOMAL_L19"/>
    <property type="match status" value="1"/>
</dbReference>
<name>RL19_XANCP</name>
<proteinExistence type="inferred from homology"/>
<accession>Q8PBC0</accession>
<protein>
    <recommendedName>
        <fullName evidence="1">Large ribosomal subunit protein bL19</fullName>
    </recommendedName>
    <alternativeName>
        <fullName evidence="2">50S ribosomal protein L19</fullName>
    </alternativeName>
</protein>
<reference key="1">
    <citation type="journal article" date="2002" name="Nature">
        <title>Comparison of the genomes of two Xanthomonas pathogens with differing host specificities.</title>
        <authorList>
            <person name="da Silva A.C.R."/>
            <person name="Ferro J.A."/>
            <person name="Reinach F.C."/>
            <person name="Farah C.S."/>
            <person name="Furlan L.R."/>
            <person name="Quaggio R.B."/>
            <person name="Monteiro-Vitorello C.B."/>
            <person name="Van Sluys M.A."/>
            <person name="Almeida N.F. Jr."/>
            <person name="Alves L.M.C."/>
            <person name="do Amaral A.M."/>
            <person name="Bertolini M.C."/>
            <person name="Camargo L.E.A."/>
            <person name="Camarotte G."/>
            <person name="Cannavan F."/>
            <person name="Cardozo J."/>
            <person name="Chambergo F."/>
            <person name="Ciapina L.P."/>
            <person name="Cicarelli R.M.B."/>
            <person name="Coutinho L.L."/>
            <person name="Cursino-Santos J.R."/>
            <person name="El-Dorry H."/>
            <person name="Faria J.B."/>
            <person name="Ferreira A.J.S."/>
            <person name="Ferreira R.C.C."/>
            <person name="Ferro M.I.T."/>
            <person name="Formighieri E.F."/>
            <person name="Franco M.C."/>
            <person name="Greggio C.C."/>
            <person name="Gruber A."/>
            <person name="Katsuyama A.M."/>
            <person name="Kishi L.T."/>
            <person name="Leite R.P."/>
            <person name="Lemos E.G.M."/>
            <person name="Lemos M.V.F."/>
            <person name="Locali E.C."/>
            <person name="Machado M.A."/>
            <person name="Madeira A.M.B.N."/>
            <person name="Martinez-Rossi N.M."/>
            <person name="Martins E.C."/>
            <person name="Meidanis J."/>
            <person name="Menck C.F.M."/>
            <person name="Miyaki C.Y."/>
            <person name="Moon D.H."/>
            <person name="Moreira L.M."/>
            <person name="Novo M.T.M."/>
            <person name="Okura V.K."/>
            <person name="Oliveira M.C."/>
            <person name="Oliveira V.R."/>
            <person name="Pereira H.A."/>
            <person name="Rossi A."/>
            <person name="Sena J.A.D."/>
            <person name="Silva C."/>
            <person name="de Souza R.F."/>
            <person name="Spinola L.A.F."/>
            <person name="Takita M.A."/>
            <person name="Tamura R.E."/>
            <person name="Teixeira E.C."/>
            <person name="Tezza R.I.D."/>
            <person name="Trindade dos Santos M."/>
            <person name="Truffi D."/>
            <person name="Tsai S.M."/>
            <person name="White F.F."/>
            <person name="Setubal J.C."/>
            <person name="Kitajima J.P."/>
        </authorList>
    </citation>
    <scope>NUCLEOTIDE SEQUENCE [LARGE SCALE GENOMIC DNA]</scope>
    <source>
        <strain>ATCC 33913 / DSM 3586 / NCPPB 528 / LMG 568 / P 25</strain>
    </source>
</reference>
<evidence type="ECO:0000255" key="1">
    <source>
        <dbReference type="HAMAP-Rule" id="MF_00402"/>
    </source>
</evidence>
<evidence type="ECO:0000305" key="2"/>
<gene>
    <name evidence="1" type="primary">rplS</name>
    <name type="ordered locus">XCC1202</name>
</gene>
<keyword id="KW-1185">Reference proteome</keyword>
<keyword id="KW-0687">Ribonucleoprotein</keyword>
<keyword id="KW-0689">Ribosomal protein</keyword>
<organism>
    <name type="scientific">Xanthomonas campestris pv. campestris (strain ATCC 33913 / DSM 3586 / NCPPB 528 / LMG 568 / P 25)</name>
    <dbReference type="NCBI Taxonomy" id="190485"/>
    <lineage>
        <taxon>Bacteria</taxon>
        <taxon>Pseudomonadati</taxon>
        <taxon>Pseudomonadota</taxon>
        <taxon>Gammaproteobacteria</taxon>
        <taxon>Lysobacterales</taxon>
        <taxon>Lysobacteraceae</taxon>
        <taxon>Xanthomonas</taxon>
    </lineage>
</organism>